<organism>
    <name type="scientific">Oryzias latipes</name>
    <name type="common">Japanese rice fish</name>
    <name type="synonym">Japanese killifish</name>
    <dbReference type="NCBI Taxonomy" id="8090"/>
    <lineage>
        <taxon>Eukaryota</taxon>
        <taxon>Metazoa</taxon>
        <taxon>Chordata</taxon>
        <taxon>Craniata</taxon>
        <taxon>Vertebrata</taxon>
        <taxon>Euteleostomi</taxon>
        <taxon>Actinopterygii</taxon>
        <taxon>Neopterygii</taxon>
        <taxon>Teleostei</taxon>
        <taxon>Neoteleostei</taxon>
        <taxon>Acanthomorphata</taxon>
        <taxon>Ovalentaria</taxon>
        <taxon>Atherinomorphae</taxon>
        <taxon>Beloniformes</taxon>
        <taxon>Adrianichthyidae</taxon>
        <taxon>Oryziinae</taxon>
        <taxon>Oryzias</taxon>
    </lineage>
</organism>
<name>MT_ORYLA</name>
<reference key="1">
    <citation type="submission" date="2003-11" db="EMBL/GenBank/DDBJ databases">
        <title>Metallothionein cDNA of medaka (Oryzias latipes).</title>
        <authorList>
            <person name="Ryu J."/>
            <person name="Bae H."/>
            <person name="Lee M."/>
            <person name="Haasch M.L."/>
        </authorList>
    </citation>
    <scope>NUCLEOTIDE SEQUENCE [MRNA]</scope>
    <source>
        <tissue>Liver</tissue>
    </source>
</reference>
<evidence type="ECO:0000250" key="1"/>
<evidence type="ECO:0000250" key="2">
    <source>
        <dbReference type="UniProtKB" id="P02795"/>
    </source>
</evidence>
<evidence type="ECO:0000250" key="3">
    <source>
        <dbReference type="UniProtKB" id="P62339"/>
    </source>
</evidence>
<evidence type="ECO:0000305" key="4"/>
<dbReference type="EMBL" id="AY466516">
    <property type="protein sequence ID" value="AAR30249.1"/>
    <property type="molecule type" value="mRNA"/>
</dbReference>
<dbReference type="FunCoup" id="Q6S4N8">
    <property type="interactions" value="75"/>
</dbReference>
<dbReference type="STRING" id="8090.ENSORLP00000019508"/>
<dbReference type="Ensembl" id="ENSORLT00000019509.2">
    <property type="protein sequence ID" value="ENSORLP00000019508.1"/>
    <property type="gene ID" value="ENSORLG00000015580.2"/>
</dbReference>
<dbReference type="KEGG" id="ola:100049397"/>
<dbReference type="eggNOG" id="KOG4738">
    <property type="taxonomic scope" value="Eukaryota"/>
</dbReference>
<dbReference type="GeneTree" id="ENSGT00950000182967"/>
<dbReference type="HOGENOM" id="CLU_171204_2_0_1"/>
<dbReference type="InParanoid" id="Q6S4N8"/>
<dbReference type="OMA" id="CACTNCK"/>
<dbReference type="OrthoDB" id="418131at2759"/>
<dbReference type="Proteomes" id="UP000001038">
    <property type="component" value="Chromosome 6"/>
</dbReference>
<dbReference type="Proteomes" id="UP000265180">
    <property type="component" value="Unplaced"/>
</dbReference>
<dbReference type="Proteomes" id="UP000265200">
    <property type="component" value="Unplaced"/>
</dbReference>
<dbReference type="Bgee" id="ENSORLG00000015580">
    <property type="expression patterns" value="Expressed in intestine and 14 other cell types or tissues"/>
</dbReference>
<dbReference type="GO" id="GO:0046872">
    <property type="term" value="F:metal ion binding"/>
    <property type="evidence" value="ECO:0007669"/>
    <property type="project" value="UniProtKB-KW"/>
</dbReference>
<dbReference type="GO" id="GO:0001525">
    <property type="term" value="P:angiogenesis"/>
    <property type="evidence" value="ECO:0007669"/>
    <property type="project" value="Ensembl"/>
</dbReference>
<dbReference type="GO" id="GO:0090050">
    <property type="term" value="P:positive regulation of cell migration involved in sprouting angiogenesis"/>
    <property type="evidence" value="ECO:0007669"/>
    <property type="project" value="Ensembl"/>
</dbReference>
<dbReference type="GO" id="GO:0010575">
    <property type="term" value="P:positive regulation of vascular endothelial growth factor production"/>
    <property type="evidence" value="ECO:0007669"/>
    <property type="project" value="Ensembl"/>
</dbReference>
<dbReference type="GO" id="GO:0046686">
    <property type="term" value="P:response to cadmium ion"/>
    <property type="evidence" value="ECO:0007669"/>
    <property type="project" value="Ensembl"/>
</dbReference>
<dbReference type="GO" id="GO:0046688">
    <property type="term" value="P:response to copper ion"/>
    <property type="evidence" value="ECO:0007669"/>
    <property type="project" value="Ensembl"/>
</dbReference>
<dbReference type="GO" id="GO:0051597">
    <property type="term" value="P:response to methylmercury"/>
    <property type="evidence" value="ECO:0007669"/>
    <property type="project" value="Ensembl"/>
</dbReference>
<dbReference type="GO" id="GO:0010043">
    <property type="term" value="P:response to zinc ion"/>
    <property type="evidence" value="ECO:0007669"/>
    <property type="project" value="Ensembl"/>
</dbReference>
<dbReference type="FunFam" id="4.10.10.10:FF:000001">
    <property type="entry name" value="Metallothionein"/>
    <property type="match status" value="1"/>
</dbReference>
<dbReference type="Gene3D" id="4.10.10.10">
    <property type="entry name" value="Metallothionein Isoform II"/>
    <property type="match status" value="1"/>
</dbReference>
<dbReference type="InterPro" id="IPR017854">
    <property type="entry name" value="Metalthion_dom_sf"/>
</dbReference>
<dbReference type="InterPro" id="IPR023587">
    <property type="entry name" value="Metalthion_dom_sf_vert"/>
</dbReference>
<dbReference type="InterPro" id="IPR000006">
    <property type="entry name" value="Metalthion_vert"/>
</dbReference>
<dbReference type="InterPro" id="IPR018064">
    <property type="entry name" value="Metalthion_vert_metal_BS"/>
</dbReference>
<dbReference type="PANTHER" id="PTHR23299">
    <property type="entry name" value="METALLOTHIONEIN"/>
    <property type="match status" value="1"/>
</dbReference>
<dbReference type="PANTHER" id="PTHR23299:SF24">
    <property type="entry name" value="METALLOTHIONEIN-1X"/>
    <property type="match status" value="1"/>
</dbReference>
<dbReference type="Pfam" id="PF00131">
    <property type="entry name" value="Metallothio"/>
    <property type="match status" value="1"/>
</dbReference>
<dbReference type="PRINTS" id="PR00860">
    <property type="entry name" value="MTVERTEBRATE"/>
</dbReference>
<dbReference type="SUPFAM" id="SSF57868">
    <property type="entry name" value="Metallothionein"/>
    <property type="match status" value="1"/>
</dbReference>
<dbReference type="PROSITE" id="PS00203">
    <property type="entry name" value="METALLOTHIONEIN_VRT"/>
    <property type="match status" value="1"/>
</dbReference>
<keyword id="KW-0479">Metal-binding</keyword>
<keyword id="KW-0480">Metal-thiolate cluster</keyword>
<keyword id="KW-1185">Reference proteome</keyword>
<comment type="function">
    <text evidence="1">Metallothioneins have a high content of cysteine residues that bind various heavy metals.</text>
</comment>
<comment type="domain">
    <text>Class I metallothioneins contain 2 metal-binding domains: four divalent ions are chelated within cluster A of the alpha domain and are coordinated via cysteinyl thiolate bridges to 11 cysteine ligands. Cluster B, the corresponding region within the beta domain, can ligate three divalent ions to 9 cysteines.</text>
</comment>
<comment type="similarity">
    <text evidence="4">Belongs to the metallothionein superfamily. Type 1 family.</text>
</comment>
<sequence length="60" mass="6007">MDPCDCSKTGKCNCGGSCTCTNCSCTSCKKSCCACCPSGCTKCASGCVCKGKTCDTTCCQ</sequence>
<proteinExistence type="inferred from homology"/>
<accession>Q6S4N8</accession>
<protein>
    <recommendedName>
        <fullName>Metallothionein</fullName>
        <shortName>MT</shortName>
    </recommendedName>
</protein>
<gene>
    <name type="primary">mt</name>
</gene>
<feature type="chain" id="PRO_0000197299" description="Metallothionein">
    <location>
        <begin position="1"/>
        <end position="60"/>
    </location>
</feature>
<feature type="region of interest" description="Beta">
    <location>
        <begin position="1"/>
        <end position="28"/>
    </location>
</feature>
<feature type="region of interest" description="Alpha">
    <location>
        <begin position="29"/>
        <end position="60"/>
    </location>
</feature>
<feature type="binding site" evidence="2">
    <location>
        <position position="4"/>
    </location>
    <ligand>
        <name>a divalent metal cation</name>
        <dbReference type="ChEBI" id="CHEBI:60240"/>
        <label>1</label>
        <note>in cluster B</note>
    </ligand>
</feature>
<feature type="binding site" evidence="2">
    <location>
        <position position="6"/>
    </location>
    <ligand>
        <name>a divalent metal cation</name>
        <dbReference type="ChEBI" id="CHEBI:60240"/>
        <label>1</label>
        <note>in cluster B</note>
    </ligand>
</feature>
<feature type="binding site" evidence="2">
    <location>
        <position position="6"/>
    </location>
    <ligand>
        <name>a divalent metal cation</name>
        <dbReference type="ChEBI" id="CHEBI:60240"/>
        <label>2</label>
        <note>in cluster B</note>
    </ligand>
</feature>
<feature type="binding site" evidence="2">
    <location>
        <position position="12"/>
    </location>
    <ligand>
        <name>a divalent metal cation</name>
        <dbReference type="ChEBI" id="CHEBI:60240"/>
        <label>2</label>
        <note>in cluster B</note>
    </ligand>
</feature>
<feature type="binding site" evidence="2">
    <location>
        <position position="14"/>
    </location>
    <ligand>
        <name>a divalent metal cation</name>
        <dbReference type="ChEBI" id="CHEBI:60240"/>
        <label>2</label>
        <note>in cluster B</note>
    </ligand>
</feature>
<feature type="binding site" evidence="2">
    <location>
        <position position="14"/>
    </location>
    <ligand>
        <name>a divalent metal cation</name>
        <dbReference type="ChEBI" id="CHEBI:60240"/>
        <label>3</label>
        <note>in cluster B</note>
    </ligand>
</feature>
<feature type="binding site" evidence="2">
    <location>
        <position position="18"/>
    </location>
    <ligand>
        <name>a divalent metal cation</name>
        <dbReference type="ChEBI" id="CHEBI:60240"/>
        <label>3</label>
        <note>in cluster B</note>
    </ligand>
</feature>
<feature type="binding site" evidence="2">
    <location>
        <position position="20"/>
    </location>
    <ligand>
        <name>a divalent metal cation</name>
        <dbReference type="ChEBI" id="CHEBI:60240"/>
        <label>1</label>
        <note>in cluster B</note>
    </ligand>
</feature>
<feature type="binding site" evidence="2">
    <location>
        <position position="23"/>
    </location>
    <ligand>
        <name>a divalent metal cation</name>
        <dbReference type="ChEBI" id="CHEBI:60240"/>
        <label>1</label>
        <note>in cluster B</note>
    </ligand>
</feature>
<feature type="binding site" evidence="2">
    <location>
        <position position="23"/>
    </location>
    <ligand>
        <name>a divalent metal cation</name>
        <dbReference type="ChEBI" id="CHEBI:60240"/>
        <label>3</label>
        <note>in cluster B</note>
    </ligand>
</feature>
<feature type="binding site" evidence="2">
    <location>
        <position position="25"/>
    </location>
    <ligand>
        <name>a divalent metal cation</name>
        <dbReference type="ChEBI" id="CHEBI:60240"/>
        <label>2</label>
        <note>in cluster B</note>
    </ligand>
</feature>
<feature type="binding site" evidence="2">
    <location>
        <position position="28"/>
    </location>
    <ligand>
        <name>a divalent metal cation</name>
        <dbReference type="ChEBI" id="CHEBI:60240"/>
        <label>3</label>
        <note>in cluster B</note>
    </ligand>
</feature>
<feature type="binding site" evidence="2">
    <location>
        <position position="32"/>
    </location>
    <ligand>
        <name>a divalent metal cation</name>
        <dbReference type="ChEBI" id="CHEBI:60240"/>
        <label>4</label>
        <note>in cluster A</note>
    </ligand>
</feature>
<feature type="binding site" evidence="2">
    <location>
        <position position="33"/>
    </location>
    <ligand>
        <name>a divalent metal cation</name>
        <dbReference type="ChEBI" id="CHEBI:60240"/>
        <label>4</label>
        <note>in cluster A</note>
    </ligand>
</feature>
<feature type="binding site" evidence="2">
    <location>
        <position position="33"/>
    </location>
    <ligand>
        <name>a divalent metal cation</name>
        <dbReference type="ChEBI" id="CHEBI:60240"/>
        <label>5</label>
        <note>in cluster A</note>
    </ligand>
</feature>
<feature type="binding site" evidence="2">
    <location>
        <position position="35"/>
    </location>
    <ligand>
        <name>a divalent metal cation</name>
        <dbReference type="ChEBI" id="CHEBI:60240"/>
        <label>5</label>
        <note>in cluster A</note>
    </ligand>
</feature>
<feature type="binding site" evidence="2">
    <location>
        <position position="36"/>
    </location>
    <ligand>
        <name>a divalent metal cation</name>
        <dbReference type="ChEBI" id="CHEBI:60240"/>
        <label>5</label>
        <note>in cluster A</note>
    </ligand>
</feature>
<feature type="binding site" evidence="2">
    <location>
        <position position="36"/>
    </location>
    <ligand>
        <name>a divalent metal cation</name>
        <dbReference type="ChEBI" id="CHEBI:60240"/>
        <label>6</label>
        <note>in cluster A</note>
    </ligand>
</feature>
<feature type="binding site" evidence="2">
    <location>
        <position position="40"/>
    </location>
    <ligand>
        <name>a divalent metal cation</name>
        <dbReference type="ChEBI" id="CHEBI:60240"/>
        <label>6</label>
        <note>in cluster A</note>
    </ligand>
</feature>
<feature type="binding site" evidence="2">
    <location>
        <position position="43"/>
    </location>
    <ligand>
        <name>a divalent metal cation</name>
        <dbReference type="ChEBI" id="CHEBI:60240"/>
        <label>4</label>
        <note>in cluster A</note>
    </ligand>
</feature>
<feature type="binding site" evidence="2">
    <location>
        <position position="43"/>
    </location>
    <ligand>
        <name>a divalent metal cation</name>
        <dbReference type="ChEBI" id="CHEBI:60240"/>
        <label>6</label>
        <note>in cluster A</note>
    </ligand>
</feature>
<feature type="binding site" evidence="2">
    <location>
        <position position="47"/>
    </location>
    <ligand>
        <name>a divalent metal cation</name>
        <dbReference type="ChEBI" id="CHEBI:60240"/>
        <label>4</label>
        <note>in cluster A</note>
    </ligand>
</feature>
<feature type="binding site" evidence="2">
    <location>
        <position position="49"/>
    </location>
    <ligand>
        <name>a divalent metal cation</name>
        <dbReference type="ChEBI" id="CHEBI:60240"/>
        <label>5</label>
        <note>in cluster A</note>
    </ligand>
</feature>
<feature type="binding site" evidence="2">
    <location>
        <position position="49"/>
    </location>
    <ligand>
        <name>a divalent metal cation</name>
        <dbReference type="ChEBI" id="CHEBI:60240"/>
        <label>7</label>
        <note>in cluster A</note>
    </ligand>
</feature>
<feature type="binding site" evidence="3">
    <location>
        <position position="54"/>
    </location>
    <ligand>
        <name>a divalent metal cation</name>
        <dbReference type="ChEBI" id="CHEBI:60240"/>
        <label>7</label>
        <note>in cluster A</note>
    </ligand>
</feature>
<feature type="binding site" evidence="2">
    <location>
        <position position="58"/>
    </location>
    <ligand>
        <name>a divalent metal cation</name>
        <dbReference type="ChEBI" id="CHEBI:60240"/>
        <label>7</label>
        <note>in cluster A</note>
    </ligand>
</feature>
<feature type="binding site" evidence="2">
    <location>
        <position position="59"/>
    </location>
    <ligand>
        <name>a divalent metal cation</name>
        <dbReference type="ChEBI" id="CHEBI:60240"/>
        <label>6</label>
        <note>in cluster A</note>
    </ligand>
</feature>
<feature type="binding site" evidence="2">
    <location>
        <position position="59"/>
    </location>
    <ligand>
        <name>a divalent metal cation</name>
        <dbReference type="ChEBI" id="CHEBI:60240"/>
        <label>7</label>
        <note>in cluster A</note>
    </ligand>
</feature>